<comment type="function">
    <text evidence="7 8 10 11">GTPase required for the nuclear export of the 60S ribosomal subunit. Acts by mediating the release of NMD3 from the 60S ribosomal subunit after export into the cytoplasm.</text>
</comment>
<comment type="subunit">
    <text evidence="4 9">Associates with the 60S ribosomal subunit. Interacts with ARB1.</text>
</comment>
<comment type="interaction">
    <interactant intactId="EBI-23885">
        <id>P53145</id>
    </interactant>
    <interactant intactId="EBI-21136">
        <id>P38344</id>
        <label>REI1</label>
    </interactant>
    <organismsDiffer>false</organismsDiffer>
    <experiments>6</experiments>
</comment>
<comment type="interaction">
    <interactant intactId="EBI-23885">
        <id>P53145</id>
    </interactant>
    <interactant intactId="EBI-9046">
        <id>Q12522</id>
        <label>TIF6</label>
    </interactant>
    <organismsDiffer>false</organismsDiffer>
    <experiments>6</experiments>
</comment>
<comment type="interaction">
    <interactant intactId="EBI-23885">
        <id>P53145</id>
    </interactant>
    <interactant intactId="EBI-14322">
        <id>Q02256</id>
        <label>YVH1</label>
    </interactant>
    <organismsDiffer>false</organismsDiffer>
    <experiments>4</experiments>
</comment>
<comment type="subcellular location">
    <subcellularLocation>
        <location evidence="4 5">Cytoplasm</location>
    </subcellularLocation>
</comment>
<comment type="domain">
    <text>In contrast to other GTP-binding proteins, this family is characterized by a circular permutation of the GTPase motifs described by a G4-G1-G3 pattern.</text>
</comment>
<comment type="miscellaneous">
    <text evidence="6">Present with 19400 molecules/cell in log phase SD medium.</text>
</comment>
<comment type="similarity">
    <text evidence="2">Belongs to the TRAFAC class YlqF/YawG GTPase family. LSG1 subfamily.</text>
</comment>
<keyword id="KW-0002">3D-structure</keyword>
<keyword id="KW-0963">Cytoplasm</keyword>
<keyword id="KW-0342">GTP-binding</keyword>
<keyword id="KW-0378">Hydrolase</keyword>
<keyword id="KW-0547">Nucleotide-binding</keyword>
<keyword id="KW-0597">Phosphoprotein</keyword>
<keyword id="KW-0653">Protein transport</keyword>
<keyword id="KW-1185">Reference proteome</keyword>
<keyword id="KW-0813">Transport</keyword>
<sequence>MPPKEAPKKWKAPKGPKPTHRKNKNKLELGRAIKYARQKENAIEYLPDGEMRFTTDKHEANWVKLRSVTQESALDEFLSTAALADKDFTADRHSNVKIIRMDSGNDSATSQGFSMTNEQRGNLNAKQRALAKDLIVPRRPEWNEGMSKFQLDRQEKEAFLEWRRKLAHLQESNEDLLLTPFERNIEVWKQLWRVVERSDLVVQIVDARNPLLFRSVDLERYVKESDDRKANLLLVNKADLLTKKQRIAWAKYFISKNISFTFYSALRANQLLEKQKEMGEDYREQDFEEADKEGFDADEKVMEKVKILSIDQLEELFLSKAPNEPLLPPLPGQPPLINIGLVGYPNVGKSSTINSLVGAKKVSVSSTPGKTKHFQTIKLSDSVMLCDCPGLVFPNFAYNKGELVCNGVLPIDQLRDYIGPAGLVAERIPKYYIEAIYGIHIQTKSRDEGGNGDIPTAQELLVAYARARGYMTQGYGSADEPRASRYILKDYVNGKLLYVNPPPHLEDDTPYTREECEEFNKDLYVFDRLPDTRKEQVQNAAKAKGIDIVDLARDLNQLTFSAHTGGDTQKEAKSVTHGGKQAALYNAAEDLDRDFFKMNNVEGRLSTPFHKVQNSSAGKRHNKKNKSKNAKSKVFSIENN</sequence>
<gene>
    <name type="primary">LSG1</name>
    <name type="ordered locus">YGL099W</name>
</gene>
<protein>
    <recommendedName>
        <fullName>Large subunit GTPase 1</fullName>
        <ecNumber>3.6.1.-</ecNumber>
    </recommendedName>
</protein>
<organism>
    <name type="scientific">Saccharomyces cerevisiae (strain ATCC 204508 / S288c)</name>
    <name type="common">Baker's yeast</name>
    <dbReference type="NCBI Taxonomy" id="559292"/>
    <lineage>
        <taxon>Eukaryota</taxon>
        <taxon>Fungi</taxon>
        <taxon>Dikarya</taxon>
        <taxon>Ascomycota</taxon>
        <taxon>Saccharomycotina</taxon>
        <taxon>Saccharomycetes</taxon>
        <taxon>Saccharomycetales</taxon>
        <taxon>Saccharomycetaceae</taxon>
        <taxon>Saccharomyces</taxon>
    </lineage>
</organism>
<feature type="chain" id="PRO_0000122454" description="Large subunit GTPase 1">
    <location>
        <begin position="1"/>
        <end position="640"/>
    </location>
</feature>
<feature type="domain" description="CP-type G" evidence="2">
    <location>
        <begin position="188"/>
        <end position="394"/>
    </location>
</feature>
<feature type="region of interest" description="Disordered" evidence="3">
    <location>
        <begin position="1"/>
        <end position="26"/>
    </location>
</feature>
<feature type="region of interest" description="Disordered" evidence="3">
    <location>
        <begin position="607"/>
        <end position="640"/>
    </location>
</feature>
<feature type="compositionally biased region" description="Basic residues" evidence="3">
    <location>
        <begin position="9"/>
        <end position="24"/>
    </location>
</feature>
<feature type="compositionally biased region" description="Basic residues" evidence="3">
    <location>
        <begin position="618"/>
        <end position="631"/>
    </location>
</feature>
<feature type="binding site" evidence="1">
    <location>
        <begin position="236"/>
        <end position="239"/>
    </location>
    <ligand>
        <name>GTP</name>
        <dbReference type="ChEBI" id="CHEBI:37565"/>
    </ligand>
</feature>
<feature type="binding site" evidence="12">
    <location>
        <begin position="343"/>
        <end position="350"/>
    </location>
    <ligand>
        <name>GTP</name>
        <dbReference type="ChEBI" id="CHEBI:37565"/>
    </ligand>
</feature>
<feature type="binding site" evidence="1">
    <location>
        <begin position="387"/>
        <end position="390"/>
    </location>
    <ligand>
        <name>GTP</name>
        <dbReference type="ChEBI" id="CHEBI:37565"/>
    </ligand>
</feature>
<feature type="modified residue" description="Phosphoserine" evidence="13">
    <location>
        <position position="103"/>
    </location>
</feature>
<feature type="mutagenesis site" description="Impairs the nuclear export of 60S ribosomal subunit in cytoplasm." evidence="7">
    <original>I</original>
    <variation>T</variation>
    <location>
        <position position="204"/>
    </location>
</feature>
<feature type="mutagenesis site" description="Dominant negative mutant; prevents the nuclear export of 60S ribosomal subunit in cytoplasm." evidence="7">
    <original>K</original>
    <variation>T</variation>
    <location>
        <position position="349"/>
    </location>
</feature>
<name>LSG1_YEAST</name>
<proteinExistence type="evidence at protein level"/>
<reference key="1">
    <citation type="journal article" date="1997" name="Yeast">
        <title>Sequence analysis of 203 kilobases from Saccharomyces cerevisiae chromosome VII.</title>
        <authorList>
            <person name="Rieger M."/>
            <person name="Brueckner M."/>
            <person name="Schaefer M."/>
            <person name="Mueller-Auer S."/>
        </authorList>
    </citation>
    <scope>NUCLEOTIDE SEQUENCE [GENOMIC DNA]</scope>
    <source>
        <strain>ATCC 204508 / S288c</strain>
    </source>
</reference>
<reference key="2">
    <citation type="journal article" date="1997" name="Nature">
        <title>The nucleotide sequence of Saccharomyces cerevisiae chromosome VII.</title>
        <authorList>
            <person name="Tettelin H."/>
            <person name="Agostoni-Carbone M.L."/>
            <person name="Albermann K."/>
            <person name="Albers M."/>
            <person name="Arroyo J."/>
            <person name="Backes U."/>
            <person name="Barreiros T."/>
            <person name="Bertani I."/>
            <person name="Bjourson A.J."/>
            <person name="Brueckner M."/>
            <person name="Bruschi C.V."/>
            <person name="Carignani G."/>
            <person name="Castagnoli L."/>
            <person name="Cerdan E."/>
            <person name="Clemente M.L."/>
            <person name="Coblenz A."/>
            <person name="Coglievina M."/>
            <person name="Coissac E."/>
            <person name="Defoor E."/>
            <person name="Del Bino S."/>
            <person name="Delius H."/>
            <person name="Delneri D."/>
            <person name="de Wergifosse P."/>
            <person name="Dujon B."/>
            <person name="Durand P."/>
            <person name="Entian K.-D."/>
            <person name="Eraso P."/>
            <person name="Escribano V."/>
            <person name="Fabiani L."/>
            <person name="Fartmann B."/>
            <person name="Feroli F."/>
            <person name="Feuermann M."/>
            <person name="Frontali L."/>
            <person name="Garcia-Gonzalez M."/>
            <person name="Garcia-Saez M.I."/>
            <person name="Goffeau A."/>
            <person name="Guerreiro P."/>
            <person name="Hani J."/>
            <person name="Hansen M."/>
            <person name="Hebling U."/>
            <person name="Hernandez K."/>
            <person name="Heumann K."/>
            <person name="Hilger F."/>
            <person name="Hofmann B."/>
            <person name="Indge K.J."/>
            <person name="James C.M."/>
            <person name="Klima R."/>
            <person name="Koetter P."/>
            <person name="Kramer B."/>
            <person name="Kramer W."/>
            <person name="Lauquin G."/>
            <person name="Leuther H."/>
            <person name="Louis E.J."/>
            <person name="Maillier E."/>
            <person name="Marconi A."/>
            <person name="Martegani E."/>
            <person name="Mazon M.J."/>
            <person name="Mazzoni C."/>
            <person name="McReynolds A.D.K."/>
            <person name="Melchioretto P."/>
            <person name="Mewes H.-W."/>
            <person name="Minenkova O."/>
            <person name="Mueller-Auer S."/>
            <person name="Nawrocki A."/>
            <person name="Netter P."/>
            <person name="Neu R."/>
            <person name="Nombela C."/>
            <person name="Oliver S.G."/>
            <person name="Panzeri L."/>
            <person name="Paoluzi S."/>
            <person name="Plevani P."/>
            <person name="Portetelle D."/>
            <person name="Portillo F."/>
            <person name="Potier S."/>
            <person name="Purnelle B."/>
            <person name="Rieger M."/>
            <person name="Riles L."/>
            <person name="Rinaldi T."/>
            <person name="Robben J."/>
            <person name="Rodrigues-Pousada C."/>
            <person name="Rodriguez-Belmonte E."/>
            <person name="Rodriguez-Torres A.M."/>
            <person name="Rose M."/>
            <person name="Ruzzi M."/>
            <person name="Saliola M."/>
            <person name="Sanchez-Perez M."/>
            <person name="Schaefer B."/>
            <person name="Schaefer M."/>
            <person name="Scharfe M."/>
            <person name="Schmidheini T."/>
            <person name="Schreer A."/>
            <person name="Skala J."/>
            <person name="Souciet J.-L."/>
            <person name="Steensma H.Y."/>
            <person name="Talla E."/>
            <person name="Thierry A."/>
            <person name="Vandenbol M."/>
            <person name="van der Aart Q.J.M."/>
            <person name="Van Dyck L."/>
            <person name="Vanoni M."/>
            <person name="Verhasselt P."/>
            <person name="Voet M."/>
            <person name="Volckaert G."/>
            <person name="Wambutt R."/>
            <person name="Watson M.D."/>
            <person name="Weber N."/>
            <person name="Wedler E."/>
            <person name="Wedler H."/>
            <person name="Wipfli P."/>
            <person name="Wolf K."/>
            <person name="Wright L.F."/>
            <person name="Zaccaria P."/>
            <person name="Zimmermann M."/>
            <person name="Zollner A."/>
            <person name="Kleine K."/>
        </authorList>
    </citation>
    <scope>NUCLEOTIDE SEQUENCE [LARGE SCALE GENOMIC DNA]</scope>
    <source>
        <strain>ATCC 204508 / S288c</strain>
    </source>
</reference>
<reference key="3">
    <citation type="journal article" date="2014" name="G3 (Bethesda)">
        <title>The reference genome sequence of Saccharomyces cerevisiae: Then and now.</title>
        <authorList>
            <person name="Engel S.R."/>
            <person name="Dietrich F.S."/>
            <person name="Fisk D.G."/>
            <person name="Binkley G."/>
            <person name="Balakrishnan R."/>
            <person name="Costanzo M.C."/>
            <person name="Dwight S.S."/>
            <person name="Hitz B.C."/>
            <person name="Karra K."/>
            <person name="Nash R.S."/>
            <person name="Weng S."/>
            <person name="Wong E.D."/>
            <person name="Lloyd P."/>
            <person name="Skrzypek M.S."/>
            <person name="Miyasato S.R."/>
            <person name="Simison M."/>
            <person name="Cherry J.M."/>
        </authorList>
    </citation>
    <scope>GENOME REANNOTATION</scope>
    <source>
        <strain>ATCC 204508 / S288c</strain>
    </source>
</reference>
<reference key="4">
    <citation type="journal article" date="2003" name="Mol. Cell. Biol.">
        <title>The putative GTPases Nog1p and Lsg1p are required for 60S ribosomal subunit biogenesis and are localized to the nucleus and cytoplasm, respectively.</title>
        <authorList>
            <person name="Kallstrom G."/>
            <person name="Hedges J."/>
            <person name="Johnson A."/>
        </authorList>
    </citation>
    <scope>SUBCELLULAR LOCATION</scope>
    <scope>INTERACTION WITH 60S RIBOSOMAL SUBUNIT</scope>
</reference>
<reference key="5">
    <citation type="journal article" date="2003" name="Nature">
        <title>Global analysis of protein localization in budding yeast.</title>
        <authorList>
            <person name="Huh W.-K."/>
            <person name="Falvo J.V."/>
            <person name="Gerke L.C."/>
            <person name="Carroll A.S."/>
            <person name="Howson R.W."/>
            <person name="Weissman J.S."/>
            <person name="O'Shea E.K."/>
        </authorList>
    </citation>
    <scope>SUBCELLULAR LOCATION [LARGE SCALE ANALYSIS]</scope>
</reference>
<reference key="6">
    <citation type="journal article" date="2003" name="Nature">
        <title>Global analysis of protein expression in yeast.</title>
        <authorList>
            <person name="Ghaemmaghami S."/>
            <person name="Huh W.-K."/>
            <person name="Bower K."/>
            <person name="Howson R.W."/>
            <person name="Belle A."/>
            <person name="Dephoure N."/>
            <person name="O'Shea E.K."/>
            <person name="Weissman J.S."/>
        </authorList>
    </citation>
    <scope>LEVEL OF PROTEIN EXPRESSION [LARGE SCALE ANALYSIS]</scope>
</reference>
<reference key="7">
    <citation type="journal article" date="2005" name="EMBO J.">
        <title>Release of the export adapter, Nmd3p, from the 60S ribosomal subunit requires Rpl10p and the cytoplasmic GTPase Lsg1p.</title>
        <authorList>
            <person name="Hedges J."/>
            <person name="West M."/>
            <person name="Johnson A.W."/>
        </authorList>
    </citation>
    <scope>FUNCTION</scope>
    <scope>MUTAGENESIS OF ILE-204 AND LYS-349</scope>
</reference>
<reference key="8">
    <citation type="journal article" date="2005" name="Mol. Cell. Biol.">
        <title>Defining the order in which Nmd3p and Rpl10p load onto nascent 60S ribosomal subunits.</title>
        <authorList>
            <person name="West M."/>
            <person name="Hedges J.B."/>
            <person name="Chen A."/>
            <person name="Johnson A.W."/>
        </authorList>
    </citation>
    <scope>FUNCTION</scope>
</reference>
<reference key="9">
    <citation type="journal article" date="2005" name="Mol. Cell. Biol.">
        <title>The novel ATP-binding cassette protein ARB1 is a shuttling factor that stimulates 40S and 60S ribosome biogenesis.</title>
        <authorList>
            <person name="Dong J."/>
            <person name="Lai R."/>
            <person name="Jennings J.L."/>
            <person name="Link A.J."/>
            <person name="Hinnebusch A.G."/>
        </authorList>
    </citation>
    <scope>INTERACTION WITH ARB1</scope>
</reference>
<reference key="10">
    <citation type="journal article" date="2006" name="J. Biol. Chem.">
        <title>Mapping the functional domains of yeast NMD3, the nuclear export adapter for the 60 S ribosomal subunit.</title>
        <authorList>
            <person name="Hedges J."/>
            <person name="Chen Y.I."/>
            <person name="West M."/>
            <person name="Bussiere C."/>
            <person name="Johnson A.W."/>
        </authorList>
    </citation>
    <scope>FUNCTION</scope>
</reference>
<reference key="11">
    <citation type="journal article" date="2007" name="J. Biol. Chem.">
        <title>Mutational analysis of the ribosomal protein Rpl10 from yeast.</title>
        <authorList>
            <person name="Hofer A."/>
            <person name="Bussiere C."/>
            <person name="Johnson A.W."/>
        </authorList>
    </citation>
    <scope>FUNCTION</scope>
</reference>
<reference key="12">
    <citation type="journal article" date="2009" name="Science">
        <title>Global analysis of Cdk1 substrate phosphorylation sites provides insights into evolution.</title>
        <authorList>
            <person name="Holt L.J."/>
            <person name="Tuch B.B."/>
            <person name="Villen J."/>
            <person name="Johnson A.D."/>
            <person name="Gygi S.P."/>
            <person name="Morgan D.O."/>
        </authorList>
    </citation>
    <scope>PHOSPHORYLATION [LARGE SCALE ANALYSIS] AT SER-103</scope>
    <scope>IDENTIFICATION BY MASS SPECTROMETRY [LARGE SCALE ANALYSIS]</scope>
</reference>
<accession>P53145</accession>
<accession>D6VU46</accession>
<evidence type="ECO:0000255" key="1"/>
<evidence type="ECO:0000255" key="2">
    <source>
        <dbReference type="PROSITE-ProRule" id="PRU01058"/>
    </source>
</evidence>
<evidence type="ECO:0000256" key="3">
    <source>
        <dbReference type="SAM" id="MobiDB-lite"/>
    </source>
</evidence>
<evidence type="ECO:0000269" key="4">
    <source>
    </source>
</evidence>
<evidence type="ECO:0000269" key="5">
    <source>
    </source>
</evidence>
<evidence type="ECO:0000269" key="6">
    <source>
    </source>
</evidence>
<evidence type="ECO:0000269" key="7">
    <source>
    </source>
</evidence>
<evidence type="ECO:0000269" key="8">
    <source>
    </source>
</evidence>
<evidence type="ECO:0000269" key="9">
    <source>
    </source>
</evidence>
<evidence type="ECO:0000269" key="10">
    <source>
    </source>
</evidence>
<evidence type="ECO:0000269" key="11">
    <source>
    </source>
</evidence>
<evidence type="ECO:0000305" key="12"/>
<evidence type="ECO:0007744" key="13">
    <source>
    </source>
</evidence>
<dbReference type="EC" id="3.6.1.-"/>
<dbReference type="EMBL" id="Z72621">
    <property type="protein sequence ID" value="CAA96805.1"/>
    <property type="molecule type" value="Genomic_DNA"/>
</dbReference>
<dbReference type="EMBL" id="BK006941">
    <property type="protein sequence ID" value="DAA08007.1"/>
    <property type="molecule type" value="Genomic_DNA"/>
</dbReference>
<dbReference type="PIR" id="S64106">
    <property type="entry name" value="S64106"/>
</dbReference>
<dbReference type="RefSeq" id="NP_011416.3">
    <property type="nucleotide sequence ID" value="NM_001180964.3"/>
</dbReference>
<dbReference type="PDB" id="5T62">
    <property type="method" value="EM"/>
    <property type="resolution" value="3.30 A"/>
    <property type="chains" value="W=1-640"/>
</dbReference>
<dbReference type="PDB" id="6N8N">
    <property type="method" value="EM"/>
    <property type="resolution" value="3.80 A"/>
    <property type="chains" value="W=1-640"/>
</dbReference>
<dbReference type="PDB" id="6N8O">
    <property type="method" value="EM"/>
    <property type="resolution" value="3.50 A"/>
    <property type="chains" value="W=1-640"/>
</dbReference>
<dbReference type="PDB" id="6QIK">
    <property type="method" value="EM"/>
    <property type="resolution" value="3.10 A"/>
    <property type="chains" value="o=1-640"/>
</dbReference>
<dbReference type="PDB" id="6QTZ">
    <property type="method" value="EM"/>
    <property type="resolution" value="3.50 A"/>
    <property type="chains" value="o=1-640"/>
</dbReference>
<dbReference type="PDB" id="6RI5">
    <property type="method" value="EM"/>
    <property type="resolution" value="3.30 A"/>
    <property type="chains" value="o=1-640"/>
</dbReference>
<dbReference type="PDB" id="6RZZ">
    <property type="method" value="EM"/>
    <property type="resolution" value="3.20 A"/>
    <property type="chains" value="o=1-640"/>
</dbReference>
<dbReference type="PDB" id="6S05">
    <property type="method" value="EM"/>
    <property type="resolution" value="3.90 A"/>
    <property type="chains" value="o=1-640"/>
</dbReference>
<dbReference type="PDBsum" id="5T62"/>
<dbReference type="PDBsum" id="6N8N"/>
<dbReference type="PDBsum" id="6N8O"/>
<dbReference type="PDBsum" id="6QIK"/>
<dbReference type="PDBsum" id="6QTZ"/>
<dbReference type="PDBsum" id="6RI5"/>
<dbReference type="PDBsum" id="6RZZ"/>
<dbReference type="PDBsum" id="6S05"/>
<dbReference type="EMDB" id="EMD-0373"/>
<dbReference type="EMDB" id="EMD-0374"/>
<dbReference type="EMDB" id="EMD-10068"/>
<dbReference type="EMDB" id="EMD-10071"/>
<dbReference type="EMDB" id="EMD-4560"/>
<dbReference type="EMDB" id="EMD-4636"/>
<dbReference type="EMDB" id="EMD-4884"/>
<dbReference type="EMDB" id="EMD-8362"/>
<dbReference type="SMR" id="P53145"/>
<dbReference type="BioGRID" id="33150">
    <property type="interactions" value="214"/>
</dbReference>
<dbReference type="DIP" id="DIP-6659N"/>
<dbReference type="FunCoup" id="P53145">
    <property type="interactions" value="1474"/>
</dbReference>
<dbReference type="IntAct" id="P53145">
    <property type="interactions" value="107"/>
</dbReference>
<dbReference type="MINT" id="P53145"/>
<dbReference type="STRING" id="4932.YGL099W"/>
<dbReference type="GlyGen" id="P53145">
    <property type="glycosylation" value="1 site"/>
</dbReference>
<dbReference type="iPTMnet" id="P53145"/>
<dbReference type="PaxDb" id="4932-YGL099W"/>
<dbReference type="PeptideAtlas" id="P53145"/>
<dbReference type="EnsemblFungi" id="YGL099W_mRNA">
    <property type="protein sequence ID" value="YGL099W"/>
    <property type="gene ID" value="YGL099W"/>
</dbReference>
<dbReference type="GeneID" id="852779"/>
<dbReference type="KEGG" id="sce:YGL099W"/>
<dbReference type="AGR" id="SGD:S000003067"/>
<dbReference type="SGD" id="S000003067">
    <property type="gene designation" value="LSG1"/>
</dbReference>
<dbReference type="VEuPathDB" id="FungiDB:YGL099W"/>
<dbReference type="eggNOG" id="KOG1424">
    <property type="taxonomic scope" value="Eukaryota"/>
</dbReference>
<dbReference type="GeneTree" id="ENSGT00940000156442"/>
<dbReference type="HOGENOM" id="CLU_011072_2_0_1"/>
<dbReference type="InParanoid" id="P53145"/>
<dbReference type="OMA" id="VNKADMM"/>
<dbReference type="OrthoDB" id="61815at2759"/>
<dbReference type="BioCyc" id="YEAST:G3O-30599-MONOMER"/>
<dbReference type="BioGRID-ORCS" id="852779">
    <property type="hits" value="8 hits in 10 CRISPR screens"/>
</dbReference>
<dbReference type="CD-CODE" id="E03F929F">
    <property type="entry name" value="Stress granule"/>
</dbReference>
<dbReference type="PRO" id="PR:P53145"/>
<dbReference type="Proteomes" id="UP000002311">
    <property type="component" value="Chromosome VII"/>
</dbReference>
<dbReference type="RNAct" id="P53145">
    <property type="molecule type" value="protein"/>
</dbReference>
<dbReference type="GO" id="GO:0005737">
    <property type="term" value="C:cytoplasm"/>
    <property type="evidence" value="ECO:0000314"/>
    <property type="project" value="SGD"/>
</dbReference>
<dbReference type="GO" id="GO:0005829">
    <property type="term" value="C:cytosol"/>
    <property type="evidence" value="ECO:0007005"/>
    <property type="project" value="SGD"/>
</dbReference>
<dbReference type="GO" id="GO:0022625">
    <property type="term" value="C:cytosolic large ribosomal subunit"/>
    <property type="evidence" value="ECO:0000314"/>
    <property type="project" value="SGD"/>
</dbReference>
<dbReference type="GO" id="GO:0043332">
    <property type="term" value="C:mating projection tip"/>
    <property type="evidence" value="ECO:0007005"/>
    <property type="project" value="SGD"/>
</dbReference>
<dbReference type="GO" id="GO:0005525">
    <property type="term" value="F:GTP binding"/>
    <property type="evidence" value="ECO:0007669"/>
    <property type="project" value="UniProtKB-KW"/>
</dbReference>
<dbReference type="GO" id="GO:0003924">
    <property type="term" value="F:GTPase activity"/>
    <property type="evidence" value="ECO:0000250"/>
    <property type="project" value="SGD"/>
</dbReference>
<dbReference type="GO" id="GO:0003729">
    <property type="term" value="F:mRNA binding"/>
    <property type="evidence" value="ECO:0007005"/>
    <property type="project" value="SGD"/>
</dbReference>
<dbReference type="GO" id="GO:0015031">
    <property type="term" value="P:protein transport"/>
    <property type="evidence" value="ECO:0007669"/>
    <property type="project" value="UniProtKB-KW"/>
</dbReference>
<dbReference type="GO" id="GO:0000027">
    <property type="term" value="P:ribosomal large subunit assembly"/>
    <property type="evidence" value="ECO:0000315"/>
    <property type="project" value="SGD"/>
</dbReference>
<dbReference type="GO" id="GO:0000054">
    <property type="term" value="P:ribosomal subunit export from nucleus"/>
    <property type="evidence" value="ECO:0000315"/>
    <property type="project" value="SGD"/>
</dbReference>
<dbReference type="CDD" id="cd01857">
    <property type="entry name" value="HSR1_MMR1"/>
    <property type="match status" value="1"/>
</dbReference>
<dbReference type="FunFam" id="3.40.50.300:FF:002482">
    <property type="entry name" value="Large-subunit GTPase"/>
    <property type="match status" value="1"/>
</dbReference>
<dbReference type="Gene3D" id="3.40.50.300">
    <property type="entry name" value="P-loop containing nucleotide triphosphate hydrolases"/>
    <property type="match status" value="1"/>
</dbReference>
<dbReference type="InterPro" id="IPR030378">
    <property type="entry name" value="G_CP_dom"/>
</dbReference>
<dbReference type="InterPro" id="IPR043358">
    <property type="entry name" value="GNL1-like"/>
</dbReference>
<dbReference type="InterPro" id="IPR006073">
    <property type="entry name" value="GTP-bd"/>
</dbReference>
<dbReference type="InterPro" id="IPR027417">
    <property type="entry name" value="P-loop_NTPase"/>
</dbReference>
<dbReference type="PANTHER" id="PTHR45709:SF2">
    <property type="entry name" value="LARGE SUBUNIT GTPASE 1 HOMOLOG"/>
    <property type="match status" value="1"/>
</dbReference>
<dbReference type="PANTHER" id="PTHR45709">
    <property type="entry name" value="LARGE SUBUNIT GTPASE 1 HOMOLOG-RELATED"/>
    <property type="match status" value="1"/>
</dbReference>
<dbReference type="Pfam" id="PF01926">
    <property type="entry name" value="MMR_HSR1"/>
    <property type="match status" value="1"/>
</dbReference>
<dbReference type="SUPFAM" id="SSF52540">
    <property type="entry name" value="P-loop containing nucleoside triphosphate hydrolases"/>
    <property type="match status" value="1"/>
</dbReference>
<dbReference type="PROSITE" id="PS51721">
    <property type="entry name" value="G_CP"/>
    <property type="match status" value="1"/>
</dbReference>